<organism>
    <name type="scientific">Methanococcus aeolicus (strain ATCC BAA-1280 / DSM 17508 / OCM 812 / Nankai-3)</name>
    <dbReference type="NCBI Taxonomy" id="419665"/>
    <lineage>
        <taxon>Archaea</taxon>
        <taxon>Methanobacteriati</taxon>
        <taxon>Methanobacteriota</taxon>
        <taxon>Methanomada group</taxon>
        <taxon>Methanococci</taxon>
        <taxon>Methanococcales</taxon>
        <taxon>Methanococcaceae</taxon>
        <taxon>Methanococcus</taxon>
    </lineage>
</organism>
<sequence>MKFELNGKIIFSKEITDDAKKDIIEVLNDRTILLKGVPTGKEEEASKIVNYEFKGNELILNIISGTYARAHEAIIRLKKPIMEKVGKIHKMGIRDIKIDNYEITINAPHNIDALENLKVPECETELNEEENTIKIIFKNIGDSELKRNIVDRAIKFVKTEIDNIGDSGEECDLTYEVCGIAPNTIVSEYKAERTISYNKDPTEESEKLGWVKRFSGKGQWFYTPPMTKLLRAFEELLMEECINKIGFDECLFPKLIPLEVMYKMRYLEGLPEGMYYVSPPKRDPEMFKEFVNEMMIKNEIPIHKLKDLLRNPGYVLAPAQCEPFYQFFDHELVDIDNPVKFVDKSGWTYRWEGGGSKGLDRVHEFLRIETVQMGAPEFVNSVRDDTLKYAEKLAEKLDLEYWTEVGDDPFYLEGRKKEERNIEFPEVPKYEMRLWLPHVKDERKGVAVTSANVHGTHFVEGFGVKDYKNRTVWTGCTGFGLSRWVIGFLAQYGFDYNDWPELIKDKIGEMPNIPKVITWPKK</sequence>
<reference key="1">
    <citation type="submission" date="2007-06" db="EMBL/GenBank/DDBJ databases">
        <title>Complete sequence of Methanococcus aeolicus Nankai-3.</title>
        <authorList>
            <consortium name="US DOE Joint Genome Institute"/>
            <person name="Copeland A."/>
            <person name="Lucas S."/>
            <person name="Lapidus A."/>
            <person name="Barry K."/>
            <person name="Glavina del Rio T."/>
            <person name="Dalin E."/>
            <person name="Tice H."/>
            <person name="Pitluck S."/>
            <person name="Chain P."/>
            <person name="Malfatti S."/>
            <person name="Shin M."/>
            <person name="Vergez L."/>
            <person name="Schmutz J."/>
            <person name="Larimer F."/>
            <person name="Land M."/>
            <person name="Hauser L."/>
            <person name="Kyrpides N."/>
            <person name="Lykidis A."/>
            <person name="Sieprawska-Lupa M."/>
            <person name="Whitman W.B."/>
            <person name="Richardson P."/>
        </authorList>
    </citation>
    <scope>NUCLEOTIDE SEQUENCE [LARGE SCALE GENOMIC DNA]</scope>
    <source>
        <strain>ATCC BAA-1280 / DSM 17508 / OCM 812 / Nankai-3</strain>
    </source>
</reference>
<evidence type="ECO:0000250" key="1"/>
<evidence type="ECO:0000305" key="2"/>
<accession>A6UX37</accession>
<keyword id="KW-0030">Aminoacyl-tRNA synthetase</keyword>
<keyword id="KW-0067">ATP-binding</keyword>
<keyword id="KW-0963">Cytoplasm</keyword>
<keyword id="KW-0436">Ligase</keyword>
<keyword id="KW-0479">Metal-binding</keyword>
<keyword id="KW-0547">Nucleotide-binding</keyword>
<keyword id="KW-0648">Protein biosynthesis</keyword>
<keyword id="KW-0862">Zinc</keyword>
<name>SYS2_META3</name>
<protein>
    <recommendedName>
        <fullName>Type-2 serine--tRNA ligase</fullName>
        <ecNumber>6.1.1.11</ecNumber>
    </recommendedName>
    <alternativeName>
        <fullName>Seryl-tRNA synthetase</fullName>
        <shortName>SerRS</shortName>
    </alternativeName>
    <alternativeName>
        <fullName>Seryl-tRNA(Ser/Sec) synthetase</fullName>
    </alternativeName>
</protein>
<gene>
    <name type="primary">serS</name>
    <name type="ordered locus">Maeo_1483</name>
</gene>
<dbReference type="EC" id="6.1.1.11"/>
<dbReference type="EMBL" id="CP000743">
    <property type="protein sequence ID" value="ABR57059.1"/>
    <property type="molecule type" value="Genomic_DNA"/>
</dbReference>
<dbReference type="RefSeq" id="WP_011974191.1">
    <property type="nucleotide sequence ID" value="NC_009635.1"/>
</dbReference>
<dbReference type="SMR" id="A6UX37"/>
<dbReference type="STRING" id="419665.Maeo_1483"/>
<dbReference type="GeneID" id="5326589"/>
<dbReference type="KEGG" id="mae:Maeo_1483"/>
<dbReference type="eggNOG" id="arCOG00403">
    <property type="taxonomic scope" value="Archaea"/>
</dbReference>
<dbReference type="HOGENOM" id="CLU_542524_0_0_2"/>
<dbReference type="OrthoDB" id="115981at2157"/>
<dbReference type="UniPathway" id="UPA00906">
    <property type="reaction ID" value="UER00895"/>
</dbReference>
<dbReference type="Proteomes" id="UP000001106">
    <property type="component" value="Chromosome"/>
</dbReference>
<dbReference type="GO" id="GO:0005737">
    <property type="term" value="C:cytoplasm"/>
    <property type="evidence" value="ECO:0007669"/>
    <property type="project" value="UniProtKB-SubCell"/>
</dbReference>
<dbReference type="GO" id="GO:0005524">
    <property type="term" value="F:ATP binding"/>
    <property type="evidence" value="ECO:0007669"/>
    <property type="project" value="UniProtKB-UniRule"/>
</dbReference>
<dbReference type="GO" id="GO:0004828">
    <property type="term" value="F:serine-tRNA ligase activity"/>
    <property type="evidence" value="ECO:0007669"/>
    <property type="project" value="UniProtKB-UniRule"/>
</dbReference>
<dbReference type="GO" id="GO:0008270">
    <property type="term" value="F:zinc ion binding"/>
    <property type="evidence" value="ECO:0007669"/>
    <property type="project" value="UniProtKB-UniRule"/>
</dbReference>
<dbReference type="GO" id="GO:0016260">
    <property type="term" value="P:selenocysteine biosynthetic process"/>
    <property type="evidence" value="ECO:0007669"/>
    <property type="project" value="UniProtKB-UniRule"/>
</dbReference>
<dbReference type="GO" id="GO:0006434">
    <property type="term" value="P:seryl-tRNA aminoacylation"/>
    <property type="evidence" value="ECO:0007669"/>
    <property type="project" value="UniProtKB-UniRule"/>
</dbReference>
<dbReference type="CDD" id="cd00670">
    <property type="entry name" value="Gly_His_Pro_Ser_Thr_tRS_core"/>
    <property type="match status" value="1"/>
</dbReference>
<dbReference type="Gene3D" id="3.30.70.1920">
    <property type="match status" value="1"/>
</dbReference>
<dbReference type="Gene3D" id="3.30.930.10">
    <property type="entry name" value="Bira Bifunctional Protein, Domain 2"/>
    <property type="match status" value="1"/>
</dbReference>
<dbReference type="InterPro" id="IPR002314">
    <property type="entry name" value="aa-tRNA-synt_IIb"/>
</dbReference>
<dbReference type="InterPro" id="IPR045864">
    <property type="entry name" value="aa-tRNA-synth_II/BPL/LPL"/>
</dbReference>
<dbReference type="InterPro" id="IPR004503">
    <property type="entry name" value="Ser-tRNA-ligase_2_arc"/>
</dbReference>
<dbReference type="InterPro" id="IPR041293">
    <property type="entry name" value="SerS_tRNA-bd"/>
</dbReference>
<dbReference type="NCBIfam" id="NF002120">
    <property type="entry name" value="PRK00960.1"/>
    <property type="match status" value="1"/>
</dbReference>
<dbReference type="NCBIfam" id="TIGR00415">
    <property type="entry name" value="serS_MJ"/>
    <property type="match status" value="1"/>
</dbReference>
<dbReference type="Pfam" id="PF00587">
    <property type="entry name" value="tRNA-synt_2b"/>
    <property type="match status" value="1"/>
</dbReference>
<dbReference type="Pfam" id="PF18490">
    <property type="entry name" value="tRNA_bind_4"/>
    <property type="match status" value="1"/>
</dbReference>
<dbReference type="SUPFAM" id="SSF55681">
    <property type="entry name" value="Class II aaRS and biotin synthetases"/>
    <property type="match status" value="1"/>
</dbReference>
<comment type="function">
    <text evidence="1">Catalyzes the attachment of serine to tRNA(Ser). Is also able to aminoacylate tRNA(Sec) with serine, to form the misacylated tRNA L-seryl-tRNA(Sec), which will be further converted into selenocysteinyl-tRNA(Sec) (By similarity).</text>
</comment>
<comment type="catalytic activity">
    <reaction>
        <text>tRNA(Ser) + L-serine + ATP = L-seryl-tRNA(Ser) + AMP + diphosphate + H(+)</text>
        <dbReference type="Rhea" id="RHEA:12292"/>
        <dbReference type="Rhea" id="RHEA-COMP:9669"/>
        <dbReference type="Rhea" id="RHEA-COMP:9703"/>
        <dbReference type="ChEBI" id="CHEBI:15378"/>
        <dbReference type="ChEBI" id="CHEBI:30616"/>
        <dbReference type="ChEBI" id="CHEBI:33019"/>
        <dbReference type="ChEBI" id="CHEBI:33384"/>
        <dbReference type="ChEBI" id="CHEBI:78442"/>
        <dbReference type="ChEBI" id="CHEBI:78533"/>
        <dbReference type="ChEBI" id="CHEBI:456215"/>
        <dbReference type="EC" id="6.1.1.11"/>
    </reaction>
</comment>
<comment type="catalytic activity">
    <reaction>
        <text>tRNA(Sec) + L-serine + ATP = L-seryl-tRNA(Sec) + AMP + diphosphate + H(+)</text>
        <dbReference type="Rhea" id="RHEA:42580"/>
        <dbReference type="Rhea" id="RHEA-COMP:9742"/>
        <dbReference type="Rhea" id="RHEA-COMP:10128"/>
        <dbReference type="ChEBI" id="CHEBI:15378"/>
        <dbReference type="ChEBI" id="CHEBI:30616"/>
        <dbReference type="ChEBI" id="CHEBI:33019"/>
        <dbReference type="ChEBI" id="CHEBI:33384"/>
        <dbReference type="ChEBI" id="CHEBI:78442"/>
        <dbReference type="ChEBI" id="CHEBI:78533"/>
        <dbReference type="ChEBI" id="CHEBI:456215"/>
        <dbReference type="EC" id="6.1.1.11"/>
    </reaction>
</comment>
<comment type="cofactor">
    <cofactor evidence="1">
        <name>Zn(2+)</name>
        <dbReference type="ChEBI" id="CHEBI:29105"/>
    </cofactor>
    <text evidence="1">Binds 1 Zn(2+) ion per subunit. This ion is coordinated with 2 cysteines, 1 glutamate and a water molecule that dissociates from the zinc ion to allow the coordination of the amino group of the serine substrate, which is essential for catalysis.</text>
</comment>
<comment type="pathway">
    <text>Aminoacyl-tRNA biosynthesis; selenocysteinyl-tRNA(Sec) biosynthesis; L-seryl-tRNA(Sec) from L-serine and tRNA(Sec): step 1/1.</text>
</comment>
<comment type="subunit">
    <text evidence="1">Homodimer.</text>
</comment>
<comment type="subcellular location">
    <subcellularLocation>
        <location evidence="1">Cytoplasm</location>
    </subcellularLocation>
</comment>
<comment type="domain">
    <text evidence="1">Consists of two distinct domains, a catalytic core and a N-terminal extension that is presumably involved in tRNA binding.</text>
</comment>
<comment type="similarity">
    <text evidence="2">Belongs to the class-II aminoacyl-tRNA synthetase family. Type-2 seryl-tRNA synthetase subfamily.</text>
</comment>
<proteinExistence type="inferred from homology"/>
<feature type="chain" id="PRO_1000165220" description="Type-2 serine--tRNA ligase">
    <location>
        <begin position="1"/>
        <end position="522"/>
    </location>
</feature>
<feature type="binding site" evidence="1">
    <location>
        <position position="319"/>
    </location>
    <ligand>
        <name>L-serine</name>
        <dbReference type="ChEBI" id="CHEBI:33384"/>
    </ligand>
</feature>
<feature type="binding site" evidence="1">
    <location>
        <position position="321"/>
    </location>
    <ligand>
        <name>Zn(2+)</name>
        <dbReference type="ChEBI" id="CHEBI:29105"/>
        <note>catalytic</note>
    </ligand>
</feature>
<feature type="binding site" evidence="1">
    <location>
        <begin position="350"/>
        <end position="352"/>
    </location>
    <ligand>
        <name>ATP</name>
        <dbReference type="ChEBI" id="CHEBI:30616"/>
    </ligand>
</feature>
<feature type="binding site" evidence="1">
    <location>
        <position position="350"/>
    </location>
    <ligand>
        <name>L-serine</name>
        <dbReference type="ChEBI" id="CHEBI:33384"/>
    </ligand>
</feature>
<feature type="binding site" evidence="1">
    <location>
        <begin position="361"/>
        <end position="362"/>
    </location>
    <ligand>
        <name>ATP</name>
        <dbReference type="ChEBI" id="CHEBI:30616"/>
    </ligand>
</feature>
<feature type="binding site" evidence="1">
    <location>
        <begin position="367"/>
        <end position="369"/>
    </location>
    <ligand>
        <name>L-serine</name>
        <dbReference type="ChEBI" id="CHEBI:33384"/>
    </ligand>
</feature>
<feature type="binding site" evidence="1">
    <location>
        <position position="369"/>
    </location>
    <ligand>
        <name>Zn(2+)</name>
        <dbReference type="ChEBI" id="CHEBI:29105"/>
        <note>catalytic</note>
    </ligand>
</feature>
<feature type="binding site" evidence="1">
    <location>
        <position position="476"/>
    </location>
    <ligand>
        <name>Zn(2+)</name>
        <dbReference type="ChEBI" id="CHEBI:29105"/>
        <note>catalytic</note>
    </ligand>
</feature>
<feature type="binding site" evidence="1">
    <location>
        <position position="483"/>
    </location>
    <ligand>
        <name>ATP</name>
        <dbReference type="ChEBI" id="CHEBI:30616"/>
    </ligand>
</feature>